<proteinExistence type="inferred from homology"/>
<reference key="1">
    <citation type="submission" date="2008-04" db="EMBL/GenBank/DDBJ databases">
        <title>Complete sequence of Yersinia pseudotuberculosis PB1/+.</title>
        <authorList>
            <person name="Copeland A."/>
            <person name="Lucas S."/>
            <person name="Lapidus A."/>
            <person name="Glavina del Rio T."/>
            <person name="Dalin E."/>
            <person name="Tice H."/>
            <person name="Bruce D."/>
            <person name="Goodwin L."/>
            <person name="Pitluck S."/>
            <person name="Munk A.C."/>
            <person name="Brettin T."/>
            <person name="Detter J.C."/>
            <person name="Han C."/>
            <person name="Tapia R."/>
            <person name="Schmutz J."/>
            <person name="Larimer F."/>
            <person name="Land M."/>
            <person name="Hauser L."/>
            <person name="Challacombe J.F."/>
            <person name="Green L."/>
            <person name="Lindler L.E."/>
            <person name="Nikolich M.P."/>
            <person name="Richardson P."/>
        </authorList>
    </citation>
    <scope>NUCLEOTIDE SEQUENCE [LARGE SCALE GENOMIC DNA]</scope>
    <source>
        <strain>PB1/+</strain>
    </source>
</reference>
<feature type="chain" id="PRO_1000130340" description="Ribosomal RNA small subunit methyltransferase A">
    <location>
        <begin position="1"/>
        <end position="272"/>
    </location>
</feature>
<feature type="binding site" evidence="1">
    <location>
        <position position="18"/>
    </location>
    <ligand>
        <name>S-adenosyl-L-methionine</name>
        <dbReference type="ChEBI" id="CHEBI:59789"/>
    </ligand>
</feature>
<feature type="binding site" evidence="1">
    <location>
        <position position="20"/>
    </location>
    <ligand>
        <name>S-adenosyl-L-methionine</name>
        <dbReference type="ChEBI" id="CHEBI:59789"/>
    </ligand>
</feature>
<feature type="binding site" evidence="1">
    <location>
        <position position="45"/>
    </location>
    <ligand>
        <name>S-adenosyl-L-methionine</name>
        <dbReference type="ChEBI" id="CHEBI:59789"/>
    </ligand>
</feature>
<feature type="binding site" evidence="1">
    <location>
        <position position="66"/>
    </location>
    <ligand>
        <name>S-adenosyl-L-methionine</name>
        <dbReference type="ChEBI" id="CHEBI:59789"/>
    </ligand>
</feature>
<feature type="binding site" evidence="1">
    <location>
        <position position="91"/>
    </location>
    <ligand>
        <name>S-adenosyl-L-methionine</name>
        <dbReference type="ChEBI" id="CHEBI:59789"/>
    </ligand>
</feature>
<feature type="binding site" evidence="1">
    <location>
        <position position="113"/>
    </location>
    <ligand>
        <name>S-adenosyl-L-methionine</name>
        <dbReference type="ChEBI" id="CHEBI:59789"/>
    </ligand>
</feature>
<name>RSMA_YERPB</name>
<comment type="function">
    <text evidence="1">Specifically dimethylates two adjacent adenosines (A1518 and A1519) in the loop of a conserved hairpin near the 3'-end of 16S rRNA in the 30S particle. May play a critical role in biogenesis of 30S subunits.</text>
</comment>
<comment type="catalytic activity">
    <reaction evidence="1">
        <text>adenosine(1518)/adenosine(1519) in 16S rRNA + 4 S-adenosyl-L-methionine = N(6)-dimethyladenosine(1518)/N(6)-dimethyladenosine(1519) in 16S rRNA + 4 S-adenosyl-L-homocysteine + 4 H(+)</text>
        <dbReference type="Rhea" id="RHEA:19609"/>
        <dbReference type="Rhea" id="RHEA-COMP:10232"/>
        <dbReference type="Rhea" id="RHEA-COMP:10233"/>
        <dbReference type="ChEBI" id="CHEBI:15378"/>
        <dbReference type="ChEBI" id="CHEBI:57856"/>
        <dbReference type="ChEBI" id="CHEBI:59789"/>
        <dbReference type="ChEBI" id="CHEBI:74411"/>
        <dbReference type="ChEBI" id="CHEBI:74493"/>
        <dbReference type="EC" id="2.1.1.182"/>
    </reaction>
</comment>
<comment type="subcellular location">
    <subcellularLocation>
        <location evidence="1">Cytoplasm</location>
    </subcellularLocation>
</comment>
<comment type="similarity">
    <text evidence="1">Belongs to the class I-like SAM-binding methyltransferase superfamily. rRNA adenine N(6)-methyltransferase family. RsmA subfamily.</text>
</comment>
<dbReference type="EC" id="2.1.1.182" evidence="1"/>
<dbReference type="EMBL" id="CP001048">
    <property type="protein sequence ID" value="ACC87640.1"/>
    <property type="molecule type" value="Genomic_DNA"/>
</dbReference>
<dbReference type="RefSeq" id="WP_011191710.1">
    <property type="nucleotide sequence ID" value="NZ_CP009780.1"/>
</dbReference>
<dbReference type="SMR" id="B2K487"/>
<dbReference type="GeneID" id="96664132"/>
<dbReference type="KEGG" id="ypb:YPTS_0656"/>
<dbReference type="PATRIC" id="fig|502801.10.peg.4341"/>
<dbReference type="GO" id="GO:0005829">
    <property type="term" value="C:cytosol"/>
    <property type="evidence" value="ECO:0007669"/>
    <property type="project" value="TreeGrafter"/>
</dbReference>
<dbReference type="GO" id="GO:0052908">
    <property type="term" value="F:16S rRNA (adenine(1518)-N(6)/adenine(1519)-N(6))-dimethyltransferase activity"/>
    <property type="evidence" value="ECO:0007669"/>
    <property type="project" value="UniProtKB-EC"/>
</dbReference>
<dbReference type="GO" id="GO:0003723">
    <property type="term" value="F:RNA binding"/>
    <property type="evidence" value="ECO:0007669"/>
    <property type="project" value="UniProtKB-KW"/>
</dbReference>
<dbReference type="CDD" id="cd02440">
    <property type="entry name" value="AdoMet_MTases"/>
    <property type="match status" value="1"/>
</dbReference>
<dbReference type="FunFam" id="1.10.8.100:FF:000001">
    <property type="entry name" value="Ribosomal RNA small subunit methyltransferase A"/>
    <property type="match status" value="1"/>
</dbReference>
<dbReference type="FunFam" id="3.40.50.150:FF:000006">
    <property type="entry name" value="Ribosomal RNA small subunit methyltransferase A"/>
    <property type="match status" value="1"/>
</dbReference>
<dbReference type="Gene3D" id="1.10.8.100">
    <property type="entry name" value="Ribosomal RNA adenine dimethylase-like, domain 2"/>
    <property type="match status" value="1"/>
</dbReference>
<dbReference type="Gene3D" id="3.40.50.150">
    <property type="entry name" value="Vaccinia Virus protein VP39"/>
    <property type="match status" value="1"/>
</dbReference>
<dbReference type="HAMAP" id="MF_00607">
    <property type="entry name" value="16SrRNA_methyltr_A"/>
    <property type="match status" value="1"/>
</dbReference>
<dbReference type="InterPro" id="IPR001737">
    <property type="entry name" value="KsgA/Erm"/>
</dbReference>
<dbReference type="InterPro" id="IPR023165">
    <property type="entry name" value="rRNA_Ade_diMease-like_C"/>
</dbReference>
<dbReference type="InterPro" id="IPR020596">
    <property type="entry name" value="rRNA_Ade_Mease_Trfase_CS"/>
</dbReference>
<dbReference type="InterPro" id="IPR020598">
    <property type="entry name" value="rRNA_Ade_methylase_Trfase_N"/>
</dbReference>
<dbReference type="InterPro" id="IPR011530">
    <property type="entry name" value="rRNA_adenine_dimethylase"/>
</dbReference>
<dbReference type="InterPro" id="IPR029063">
    <property type="entry name" value="SAM-dependent_MTases_sf"/>
</dbReference>
<dbReference type="NCBIfam" id="TIGR00755">
    <property type="entry name" value="ksgA"/>
    <property type="match status" value="1"/>
</dbReference>
<dbReference type="PANTHER" id="PTHR11727">
    <property type="entry name" value="DIMETHYLADENOSINE TRANSFERASE"/>
    <property type="match status" value="1"/>
</dbReference>
<dbReference type="PANTHER" id="PTHR11727:SF7">
    <property type="entry name" value="DIMETHYLADENOSINE TRANSFERASE-RELATED"/>
    <property type="match status" value="1"/>
</dbReference>
<dbReference type="Pfam" id="PF00398">
    <property type="entry name" value="RrnaAD"/>
    <property type="match status" value="1"/>
</dbReference>
<dbReference type="SMART" id="SM00650">
    <property type="entry name" value="rADc"/>
    <property type="match status" value="1"/>
</dbReference>
<dbReference type="SUPFAM" id="SSF53335">
    <property type="entry name" value="S-adenosyl-L-methionine-dependent methyltransferases"/>
    <property type="match status" value="1"/>
</dbReference>
<dbReference type="PROSITE" id="PS01131">
    <property type="entry name" value="RRNA_A_DIMETH"/>
    <property type="match status" value="1"/>
</dbReference>
<dbReference type="PROSITE" id="PS51689">
    <property type="entry name" value="SAM_RNA_A_N6_MT"/>
    <property type="match status" value="1"/>
</dbReference>
<keyword id="KW-0963">Cytoplasm</keyword>
<keyword id="KW-0489">Methyltransferase</keyword>
<keyword id="KW-0694">RNA-binding</keyword>
<keyword id="KW-0698">rRNA processing</keyword>
<keyword id="KW-0949">S-adenosyl-L-methionine</keyword>
<keyword id="KW-0808">Transferase</keyword>
<organism>
    <name type="scientific">Yersinia pseudotuberculosis serotype IB (strain PB1/+)</name>
    <dbReference type="NCBI Taxonomy" id="502801"/>
    <lineage>
        <taxon>Bacteria</taxon>
        <taxon>Pseudomonadati</taxon>
        <taxon>Pseudomonadota</taxon>
        <taxon>Gammaproteobacteria</taxon>
        <taxon>Enterobacterales</taxon>
        <taxon>Yersiniaceae</taxon>
        <taxon>Yersinia</taxon>
    </lineage>
</organism>
<sequence length="272" mass="30428">MNNRVHQGHFARKRFGQNFLNDQFVIDSIVSAIHPVPGEAVVEIGPGLGALTEPVAARMDHMTVIELDRDLAARLASHPQLKDKLTIHQQDAMKVNFSELSEQAGQPLRVFGNLPYNISTPLMFHLFSYTDAIRDMHFMLQKEVVNRLVAGPNSKAYGRLTVMAQYYCNVIPVLEVPPTAFTPAPKVDSAVVRLIPHVQMPHPVGDVRMLSRITTQAFNQRRKTVRNSLGDLFTSEQLIELGIDPILRAENISVAQYCKLANWLSAQSTPQK</sequence>
<evidence type="ECO:0000255" key="1">
    <source>
        <dbReference type="HAMAP-Rule" id="MF_00607"/>
    </source>
</evidence>
<protein>
    <recommendedName>
        <fullName evidence="1">Ribosomal RNA small subunit methyltransferase A</fullName>
        <ecNumber evidence="1">2.1.1.182</ecNumber>
    </recommendedName>
    <alternativeName>
        <fullName evidence="1">16S rRNA (adenine(1518)-N(6)/adenine(1519)-N(6))-dimethyltransferase</fullName>
    </alternativeName>
    <alternativeName>
        <fullName evidence="1">16S rRNA dimethyladenosine transferase</fullName>
    </alternativeName>
    <alternativeName>
        <fullName evidence="1">16S rRNA dimethylase</fullName>
    </alternativeName>
    <alternativeName>
        <fullName evidence="1">S-adenosylmethionine-6-N', N'-adenosyl(rRNA) dimethyltransferase</fullName>
    </alternativeName>
</protein>
<gene>
    <name evidence="1" type="primary">rsmA</name>
    <name evidence="1" type="synonym">ksgA</name>
    <name type="ordered locus">YPTS_0656</name>
</gene>
<accession>B2K487</accession>